<name>CASK_TRAJA</name>
<proteinExistence type="evidence at transcript level"/>
<gene>
    <name type="primary">CSN3</name>
    <name type="synonym">CSN10</name>
    <name type="synonym">CSNK</name>
</gene>
<evidence type="ECO:0000250" key="1"/>
<evidence type="ECO:0000250" key="2">
    <source>
        <dbReference type="UniProtKB" id="P02668"/>
    </source>
</evidence>
<evidence type="ECO:0000250" key="3">
    <source>
        <dbReference type="UniProtKB" id="P02670"/>
    </source>
</evidence>
<evidence type="ECO:0000255" key="4"/>
<evidence type="ECO:0000305" key="5"/>
<comment type="function">
    <text>Kappa-casein stabilizes micelle formation, preventing casein precipitation in milk.</text>
</comment>
<comment type="subcellular location">
    <subcellularLocation>
        <location>Secreted</location>
    </subcellularLocation>
</comment>
<comment type="tissue specificity">
    <text>Mammary gland specific. Secreted in milk.</text>
</comment>
<comment type="similarity">
    <text evidence="5">Belongs to the kappa-casein family.</text>
</comment>
<reference key="1">
    <citation type="journal article" date="1995" name="J. Mol. Evol.">
        <title>Molecular phylogeny based on the kappa-casein and cytochrome b sequences in the mammalian suborder ruminantia.</title>
        <authorList>
            <person name="Chikuni K."/>
            <person name="Mori Y."/>
            <person name="Tabata T."/>
            <person name="Saito M."/>
            <person name="Monma M."/>
            <person name="Kosugiyama M."/>
        </authorList>
    </citation>
    <scope>NUCLEOTIDE SEQUENCE [GENOMIC DNA]</scope>
</reference>
<keyword id="KW-0325">Glycoprotein</keyword>
<keyword id="KW-0494">Milk protein</keyword>
<keyword id="KW-0597">Phosphoprotein</keyword>
<keyword id="KW-0964">Secreted</keyword>
<keyword id="KW-0732">Signal</keyword>
<feature type="signal peptide" evidence="4">
    <location>
        <begin position="1" status="less than"/>
        <end position="2"/>
    </location>
</feature>
<feature type="chain" id="PRO_0000004508" description="Kappa-casein">
    <location>
        <begin position="3"/>
        <end position="171"/>
    </location>
</feature>
<feature type="site" description="Cleavage; by chymosin/rennin" evidence="1">
    <location>
        <begin position="107"/>
        <end position="108"/>
    </location>
</feature>
<feature type="modified residue" description="Phosphothreonine" evidence="2">
    <location>
        <position position="147"/>
    </location>
</feature>
<feature type="modified residue" description="Phosphoserine; alternate" evidence="2">
    <location>
        <position position="151"/>
    </location>
</feature>
<feature type="modified residue" description="Phosphoserine" evidence="3">
    <location>
        <position position="168"/>
    </location>
</feature>
<feature type="glycosylation site" description="O-linked (GalNAc...) threonine" evidence="2">
    <location>
        <position position="123"/>
    </location>
</feature>
<feature type="glycosylation site" description="O-linked (GalNAc...) threonine" evidence="2">
    <location>
        <position position="133"/>
    </location>
</feature>
<feature type="glycosylation site" description="O-linked (GalNAc...) threonine" evidence="2">
    <location>
        <position position="135"/>
    </location>
</feature>
<feature type="glycosylation site" description="O-linked (GalNAc...) threonine" evidence="2">
    <location>
        <position position="138"/>
    </location>
</feature>
<feature type="glycosylation site" description="O-linked (GalNAc...) threonine" evidence="2">
    <location>
        <position position="144"/>
    </location>
</feature>
<feature type="glycosylation site" description="O-linked (GalNAc...) serine; alternate" evidence="2">
    <location>
        <position position="151"/>
    </location>
</feature>
<feature type="glycosylation site" description="O-linked (GalNAc...) threonine" evidence="2">
    <location>
        <position position="167"/>
    </location>
</feature>
<feature type="non-terminal residue">
    <location>
        <position position="1"/>
    </location>
</feature>
<protein>
    <recommendedName>
        <fullName>Kappa-casein</fullName>
    </recommendedName>
</protein>
<sequence length="171" mass="19106">VAQVQYQEQLTGCENDERFFNDKTIKYIPIPYLLNRYPSYGLNYYQQRPPALINNQFLPFSFYAKPMAVRSPAQILQWQVPLNAVSAKPCQAPPTTMARRPRPHLSFMAIPPKKDQDKTDTPTINTIVTVEPTTTPTTESIVNTVATLEASSESIASAPETTTVQVTSAEV</sequence>
<dbReference type="EMBL" id="D14381">
    <property type="protein sequence ID" value="BAA03289.1"/>
    <property type="molecule type" value="Genomic_DNA"/>
</dbReference>
<dbReference type="GlyCosmos" id="Q29137">
    <property type="glycosylation" value="7 sites, No reported glycans"/>
</dbReference>
<dbReference type="GO" id="GO:0005615">
    <property type="term" value="C:extracellular space"/>
    <property type="evidence" value="ECO:0007669"/>
    <property type="project" value="TreeGrafter"/>
</dbReference>
<dbReference type="GO" id="GO:0007595">
    <property type="term" value="P:lactation"/>
    <property type="evidence" value="ECO:0007669"/>
    <property type="project" value="TreeGrafter"/>
</dbReference>
<dbReference type="GO" id="GO:0050821">
    <property type="term" value="P:protein stabilization"/>
    <property type="evidence" value="ECO:0007669"/>
    <property type="project" value="TreeGrafter"/>
</dbReference>
<dbReference type="InterPro" id="IPR000117">
    <property type="entry name" value="Casein_kappa"/>
</dbReference>
<dbReference type="PANTHER" id="PTHR11470">
    <property type="entry name" value="KAPPA CASEIN"/>
    <property type="match status" value="1"/>
</dbReference>
<dbReference type="PANTHER" id="PTHR11470:SF2">
    <property type="entry name" value="KAPPA-CASEIN"/>
    <property type="match status" value="1"/>
</dbReference>
<dbReference type="Pfam" id="PF00997">
    <property type="entry name" value="Casein_kappa"/>
    <property type="match status" value="1"/>
</dbReference>
<organism>
    <name type="scientific">Tragulus javanicus</name>
    <name type="common">Lesser Malay chevrotain</name>
    <name type="synonym">Lesser mouse deer</name>
    <dbReference type="NCBI Taxonomy" id="9849"/>
    <lineage>
        <taxon>Eukaryota</taxon>
        <taxon>Metazoa</taxon>
        <taxon>Chordata</taxon>
        <taxon>Craniata</taxon>
        <taxon>Vertebrata</taxon>
        <taxon>Euteleostomi</taxon>
        <taxon>Mammalia</taxon>
        <taxon>Eutheria</taxon>
        <taxon>Laurasiatheria</taxon>
        <taxon>Artiodactyla</taxon>
        <taxon>Ruminantia</taxon>
        <taxon>Tragulina</taxon>
        <taxon>Tragulidae</taxon>
        <taxon>Tragulus</taxon>
    </lineage>
</organism>
<accession>Q29137</accession>